<gene>
    <name evidence="1" type="primary">rpmA</name>
    <name type="ordered locus">KPK_0526</name>
</gene>
<feature type="chain" id="PRO_1000128762" description="Large ribosomal subunit protein bL27">
    <location>
        <begin position="1"/>
        <end position="85"/>
    </location>
</feature>
<feature type="region of interest" description="Disordered" evidence="2">
    <location>
        <begin position="1"/>
        <end position="20"/>
    </location>
</feature>
<sequence>MAHKKAGGSTRNGRDSEAKRLGVKRFGGEAVLAGSIIVRQRGTKFHAGTNVGCGRDHTLFALTDGKVKFEVKGPKNRKFISIVAE</sequence>
<organism>
    <name type="scientific">Klebsiella pneumoniae (strain 342)</name>
    <dbReference type="NCBI Taxonomy" id="507522"/>
    <lineage>
        <taxon>Bacteria</taxon>
        <taxon>Pseudomonadati</taxon>
        <taxon>Pseudomonadota</taxon>
        <taxon>Gammaproteobacteria</taxon>
        <taxon>Enterobacterales</taxon>
        <taxon>Enterobacteriaceae</taxon>
        <taxon>Klebsiella/Raoultella group</taxon>
        <taxon>Klebsiella</taxon>
        <taxon>Klebsiella pneumoniae complex</taxon>
    </lineage>
</organism>
<comment type="similarity">
    <text evidence="1">Belongs to the bacterial ribosomal protein bL27 family.</text>
</comment>
<evidence type="ECO:0000255" key="1">
    <source>
        <dbReference type="HAMAP-Rule" id="MF_00539"/>
    </source>
</evidence>
<evidence type="ECO:0000256" key="2">
    <source>
        <dbReference type="SAM" id="MobiDB-lite"/>
    </source>
</evidence>
<evidence type="ECO:0000305" key="3"/>
<accession>B5XSV6</accession>
<reference key="1">
    <citation type="journal article" date="2008" name="PLoS Genet.">
        <title>Complete genome sequence of the N2-fixing broad host range endophyte Klebsiella pneumoniae 342 and virulence predictions verified in mice.</title>
        <authorList>
            <person name="Fouts D.E."/>
            <person name="Tyler H.L."/>
            <person name="DeBoy R.T."/>
            <person name="Daugherty S."/>
            <person name="Ren Q."/>
            <person name="Badger J.H."/>
            <person name="Durkin A.S."/>
            <person name="Huot H."/>
            <person name="Shrivastava S."/>
            <person name="Kothari S."/>
            <person name="Dodson R.J."/>
            <person name="Mohamoud Y."/>
            <person name="Khouri H."/>
            <person name="Roesch L.F.W."/>
            <person name="Krogfelt K.A."/>
            <person name="Struve C."/>
            <person name="Triplett E.W."/>
            <person name="Methe B.A."/>
        </authorList>
    </citation>
    <scope>NUCLEOTIDE SEQUENCE [LARGE SCALE GENOMIC DNA]</scope>
    <source>
        <strain>342</strain>
    </source>
</reference>
<name>RL27_KLEP3</name>
<keyword id="KW-0687">Ribonucleoprotein</keyword>
<keyword id="KW-0689">Ribosomal protein</keyword>
<proteinExistence type="inferred from homology"/>
<dbReference type="EMBL" id="CP000964">
    <property type="protein sequence ID" value="ACI10917.1"/>
    <property type="molecule type" value="Genomic_DNA"/>
</dbReference>
<dbReference type="SMR" id="B5XSV6"/>
<dbReference type="KEGG" id="kpe:KPK_0526"/>
<dbReference type="HOGENOM" id="CLU_095424_4_1_6"/>
<dbReference type="Proteomes" id="UP000001734">
    <property type="component" value="Chromosome"/>
</dbReference>
<dbReference type="GO" id="GO:0022625">
    <property type="term" value="C:cytosolic large ribosomal subunit"/>
    <property type="evidence" value="ECO:0007669"/>
    <property type="project" value="TreeGrafter"/>
</dbReference>
<dbReference type="GO" id="GO:0003735">
    <property type="term" value="F:structural constituent of ribosome"/>
    <property type="evidence" value="ECO:0007669"/>
    <property type="project" value="InterPro"/>
</dbReference>
<dbReference type="GO" id="GO:0006412">
    <property type="term" value="P:translation"/>
    <property type="evidence" value="ECO:0007669"/>
    <property type="project" value="UniProtKB-UniRule"/>
</dbReference>
<dbReference type="FunFam" id="2.40.50.100:FF:000001">
    <property type="entry name" value="50S ribosomal protein L27"/>
    <property type="match status" value="1"/>
</dbReference>
<dbReference type="Gene3D" id="2.40.50.100">
    <property type="match status" value="1"/>
</dbReference>
<dbReference type="HAMAP" id="MF_00539">
    <property type="entry name" value="Ribosomal_bL27"/>
    <property type="match status" value="1"/>
</dbReference>
<dbReference type="InterPro" id="IPR001684">
    <property type="entry name" value="Ribosomal_bL27"/>
</dbReference>
<dbReference type="InterPro" id="IPR018261">
    <property type="entry name" value="Ribosomal_bL27_CS"/>
</dbReference>
<dbReference type="NCBIfam" id="TIGR00062">
    <property type="entry name" value="L27"/>
    <property type="match status" value="1"/>
</dbReference>
<dbReference type="PANTHER" id="PTHR15893:SF0">
    <property type="entry name" value="LARGE RIBOSOMAL SUBUNIT PROTEIN BL27M"/>
    <property type="match status" value="1"/>
</dbReference>
<dbReference type="PANTHER" id="PTHR15893">
    <property type="entry name" value="RIBOSOMAL PROTEIN L27"/>
    <property type="match status" value="1"/>
</dbReference>
<dbReference type="Pfam" id="PF01016">
    <property type="entry name" value="Ribosomal_L27"/>
    <property type="match status" value="1"/>
</dbReference>
<dbReference type="PRINTS" id="PR00063">
    <property type="entry name" value="RIBOSOMALL27"/>
</dbReference>
<dbReference type="SUPFAM" id="SSF110324">
    <property type="entry name" value="Ribosomal L27 protein-like"/>
    <property type="match status" value="1"/>
</dbReference>
<dbReference type="PROSITE" id="PS00831">
    <property type="entry name" value="RIBOSOMAL_L27"/>
    <property type="match status" value="1"/>
</dbReference>
<protein>
    <recommendedName>
        <fullName evidence="1">Large ribosomal subunit protein bL27</fullName>
    </recommendedName>
    <alternativeName>
        <fullName evidence="3">50S ribosomal protein L27</fullName>
    </alternativeName>
</protein>